<sequence length="559" mass="62421">MEKKENGLDGKQSGRVINGPTNPMVTPLLNDLYQFTMAYAYWKAGKQSERSVFDLYFRKNPFGGEYTIFAGLEECIKFLANFNLTDEEIDFVRDSLPGCEEAFCDYLRGLDCSDIEVYAISEGSVVFPKVPLLRIEGPVAVVQLLETPFLNLINYASLVATNAARHRFVAGKSKLLLEFGARRAQGPDGAISASKYCYLGGFDATSNVAAGKLFGIPLRGTHSHAFVSSFMSLDEIVDKVLRSSDGKSTCKDFICLVQTCLTKIQNSSSLQGIFSETNQSELAAFISYALAFPNSFLALVDTYDVMKSGIPNFCAVALALNELGYKAVGIRLDSGDLAYLSTEVRKFFCAIERDLKVPDFGKMIVTASNDLNEETVDALNKQGHEVDAFGIGTNLVTCYAQAALGCVFKLVEINNQPRIKLSEDVTKVSIPCKKRTYRLFGKEGYPLVDIMTGENEPPPKVGERLLCRHPFNESKRAYVVPQRVEELLKCYWRGNADEAREELEPLKELRNRCIKQLENMRPDHMRRLNPTPYKVSVSAKLYDFIHFLWLNEAPVGELH</sequence>
<feature type="chain" id="PRO_0000432217" description="Nicotinate phosphoribosyltransferase 1">
    <location>
        <begin position="1"/>
        <end position="559"/>
    </location>
</feature>
<feature type="binding site" evidence="3">
    <location>
        <position position="33"/>
    </location>
    <ligand>
        <name>nicotinate</name>
        <dbReference type="ChEBI" id="CHEBI:32544"/>
    </ligand>
</feature>
<feature type="binding site" evidence="3">
    <location>
        <position position="221"/>
    </location>
    <ligand>
        <name>nicotinate</name>
        <dbReference type="ChEBI" id="CHEBI:32544"/>
    </ligand>
</feature>
<feature type="binding site" evidence="3">
    <location>
        <position position="331"/>
    </location>
    <ligand>
        <name>nicotinate</name>
        <dbReference type="ChEBI" id="CHEBI:32544"/>
    </ligand>
</feature>
<feature type="binding site" evidence="3">
    <location>
        <position position="393"/>
    </location>
    <ligand>
        <name>5-phospho-alpha-D-ribose 1-diphosphate</name>
        <dbReference type="ChEBI" id="CHEBI:58017"/>
    </ligand>
</feature>
<feature type="modified residue" description="Phosphohistidine" evidence="1">
    <location>
        <position position="224"/>
    </location>
</feature>
<gene>
    <name evidence="5" type="primary">NAPRT1</name>
    <name evidence="7" type="ordered locus">At4g36940</name>
    <name evidence="9" type="ORF">AP22.31</name>
</gene>
<dbReference type="EC" id="6.3.4.21" evidence="6"/>
<dbReference type="EMBL" id="Z99707">
    <property type="protein sequence ID" value="CAB16797.1"/>
    <property type="status" value="ALT_SEQ"/>
    <property type="molecule type" value="Genomic_DNA"/>
</dbReference>
<dbReference type="EMBL" id="AL161590">
    <property type="protein sequence ID" value="CAB80360.1"/>
    <property type="status" value="ALT_SEQ"/>
    <property type="molecule type" value="Genomic_DNA"/>
</dbReference>
<dbReference type="EMBL" id="CP002687">
    <property type="protein sequence ID" value="AEE86721.1"/>
    <property type="molecule type" value="Genomic_DNA"/>
</dbReference>
<dbReference type="EMBL" id="AY093004">
    <property type="protein sequence ID" value="AAM13003.1"/>
    <property type="molecule type" value="mRNA"/>
</dbReference>
<dbReference type="PIR" id="C85436">
    <property type="entry name" value="C85436"/>
</dbReference>
<dbReference type="RefSeq" id="NP_195412.3">
    <property type="nucleotide sequence ID" value="NM_119858.6"/>
</dbReference>
<dbReference type="SMR" id="Q8RWM2"/>
<dbReference type="FunCoup" id="Q8RWM2">
    <property type="interactions" value="2142"/>
</dbReference>
<dbReference type="STRING" id="3702.Q8RWM2"/>
<dbReference type="PaxDb" id="3702-AT4G36940.1"/>
<dbReference type="ProteomicsDB" id="251120"/>
<dbReference type="EnsemblPlants" id="AT4G36940.1">
    <property type="protein sequence ID" value="AT4G36940.1"/>
    <property type="gene ID" value="AT4G36940"/>
</dbReference>
<dbReference type="GeneID" id="829848"/>
<dbReference type="Gramene" id="AT4G36940.1">
    <property type="protein sequence ID" value="AT4G36940.1"/>
    <property type="gene ID" value="AT4G36940"/>
</dbReference>
<dbReference type="KEGG" id="ath:AT4G36940"/>
<dbReference type="Araport" id="AT4G36940"/>
<dbReference type="TAIR" id="AT4G36940">
    <property type="gene designation" value="NAPRT1"/>
</dbReference>
<dbReference type="eggNOG" id="KOG2511">
    <property type="taxonomic scope" value="Eukaryota"/>
</dbReference>
<dbReference type="HOGENOM" id="CLU_025154_1_0_1"/>
<dbReference type="InParanoid" id="Q8RWM2"/>
<dbReference type="OMA" id="MKCYWAG"/>
<dbReference type="PhylomeDB" id="Q8RWM2"/>
<dbReference type="BioCyc" id="ARA:AT4G36940-MONOMER"/>
<dbReference type="UniPathway" id="UPA00253">
    <property type="reaction ID" value="UER00457"/>
</dbReference>
<dbReference type="PRO" id="PR:Q8RWM2"/>
<dbReference type="Proteomes" id="UP000006548">
    <property type="component" value="Chromosome 4"/>
</dbReference>
<dbReference type="ExpressionAtlas" id="Q8RWM2">
    <property type="expression patterns" value="baseline and differential"/>
</dbReference>
<dbReference type="GO" id="GO:0016757">
    <property type="term" value="F:glycosyltransferase activity"/>
    <property type="evidence" value="ECO:0007669"/>
    <property type="project" value="UniProtKB-KW"/>
</dbReference>
<dbReference type="GO" id="GO:0046872">
    <property type="term" value="F:metal ion binding"/>
    <property type="evidence" value="ECO:0007669"/>
    <property type="project" value="UniProtKB-KW"/>
</dbReference>
<dbReference type="GO" id="GO:0004516">
    <property type="term" value="F:nicotinate phosphoribosyltransferase activity"/>
    <property type="evidence" value="ECO:0007669"/>
    <property type="project" value="UniProtKB-EC"/>
</dbReference>
<dbReference type="GO" id="GO:0009435">
    <property type="term" value="P:NAD biosynthetic process"/>
    <property type="evidence" value="ECO:0007669"/>
    <property type="project" value="UniProtKB-UniPathway"/>
</dbReference>
<dbReference type="CDD" id="cd01570">
    <property type="entry name" value="NAPRTase_A"/>
    <property type="match status" value="1"/>
</dbReference>
<dbReference type="FunFam" id="3.20.140.10:FF:000002">
    <property type="entry name" value="Nicotinate phosphoribosyltransferase"/>
    <property type="match status" value="1"/>
</dbReference>
<dbReference type="FunFam" id="3.20.140.10:FF:000006">
    <property type="entry name" value="Nicotinate phosphoribosyltransferase"/>
    <property type="match status" value="1"/>
</dbReference>
<dbReference type="FunFam" id="3.20.20.70:FF:000155">
    <property type="entry name" value="Nicotinate phosphoribosyltransferase"/>
    <property type="match status" value="1"/>
</dbReference>
<dbReference type="FunFam" id="3.20.20.70:FF:000227">
    <property type="entry name" value="Nicotinate phosphoribosyltransferase"/>
    <property type="match status" value="1"/>
</dbReference>
<dbReference type="Gene3D" id="3.20.20.70">
    <property type="entry name" value="Aldolase class I"/>
    <property type="match status" value="1"/>
</dbReference>
<dbReference type="Gene3D" id="3.20.140.10">
    <property type="entry name" value="nicotinate phosphoribosyltransferase"/>
    <property type="match status" value="2"/>
</dbReference>
<dbReference type="InterPro" id="IPR013785">
    <property type="entry name" value="Aldolase_TIM"/>
</dbReference>
<dbReference type="InterPro" id="IPR041525">
    <property type="entry name" value="N/Namide_PRibTrfase"/>
</dbReference>
<dbReference type="InterPro" id="IPR041619">
    <property type="entry name" value="NAPRTase_C"/>
</dbReference>
<dbReference type="InterPro" id="IPR040727">
    <property type="entry name" value="NAPRTase_N"/>
</dbReference>
<dbReference type="InterPro" id="IPR007229">
    <property type="entry name" value="Nic_PRibTrfase-Fam"/>
</dbReference>
<dbReference type="InterPro" id="IPR006405">
    <property type="entry name" value="Nic_PRibTrfase_pncB"/>
</dbReference>
<dbReference type="InterPro" id="IPR036068">
    <property type="entry name" value="Nicotinate_pribotase-like_C"/>
</dbReference>
<dbReference type="NCBIfam" id="TIGR01513">
    <property type="entry name" value="NAPRTase_put"/>
    <property type="match status" value="1"/>
</dbReference>
<dbReference type="PANTHER" id="PTHR11098">
    <property type="entry name" value="NICOTINATE PHOSPHORIBOSYLTRANSFERASE"/>
    <property type="match status" value="1"/>
</dbReference>
<dbReference type="PANTHER" id="PTHR11098:SF19">
    <property type="entry name" value="NICOTINATE PHOSPHORIBOSYLTRANSFERASE 1"/>
    <property type="match status" value="1"/>
</dbReference>
<dbReference type="Pfam" id="PF04095">
    <property type="entry name" value="NAPRTase"/>
    <property type="match status" value="1"/>
</dbReference>
<dbReference type="Pfam" id="PF17956">
    <property type="entry name" value="NAPRTase_C"/>
    <property type="match status" value="1"/>
</dbReference>
<dbReference type="Pfam" id="PF17767">
    <property type="entry name" value="NAPRTase_N"/>
    <property type="match status" value="1"/>
</dbReference>
<dbReference type="PIRSF" id="PIRSF000484">
    <property type="entry name" value="NAPRT"/>
    <property type="match status" value="1"/>
</dbReference>
<dbReference type="SUPFAM" id="SSF51690">
    <property type="entry name" value="Nicotinate/Quinolinate PRTase C-terminal domain-like"/>
    <property type="match status" value="1"/>
</dbReference>
<dbReference type="SUPFAM" id="SSF54675">
    <property type="entry name" value="Nicotinate/Quinolinate PRTase N-terminal domain-like"/>
    <property type="match status" value="1"/>
</dbReference>
<proteinExistence type="evidence at transcript level"/>
<accession>Q8RWM2</accession>
<accession>O23191</accession>
<name>NPRT1_ARATH</name>
<reference key="1">
    <citation type="journal article" date="1998" name="Nature">
        <title>Analysis of 1.9 Mb of contiguous sequence from chromosome 4 of Arabidopsis thaliana.</title>
        <authorList>
            <person name="Bevan M."/>
            <person name="Bancroft I."/>
            <person name="Bent E."/>
            <person name="Love K."/>
            <person name="Goodman H.M."/>
            <person name="Dean C."/>
            <person name="Bergkamp R."/>
            <person name="Dirkse W."/>
            <person name="van Staveren M."/>
            <person name="Stiekema W."/>
            <person name="Drost L."/>
            <person name="Ridley P."/>
            <person name="Hudson S.-A."/>
            <person name="Patel K."/>
            <person name="Murphy G."/>
            <person name="Piffanelli P."/>
            <person name="Wedler H."/>
            <person name="Wedler E."/>
            <person name="Wambutt R."/>
            <person name="Weitzenegger T."/>
            <person name="Pohl T."/>
            <person name="Terryn N."/>
            <person name="Gielen J."/>
            <person name="Villarroel R."/>
            <person name="De Clercq R."/>
            <person name="van Montagu M."/>
            <person name="Lecharny A."/>
            <person name="Aubourg S."/>
            <person name="Gy I."/>
            <person name="Kreis M."/>
            <person name="Lao N."/>
            <person name="Kavanagh T."/>
            <person name="Hempel S."/>
            <person name="Kotter P."/>
            <person name="Entian K.-D."/>
            <person name="Rieger M."/>
            <person name="Schaefer M."/>
            <person name="Funk B."/>
            <person name="Mueller-Auer S."/>
            <person name="Silvey M."/>
            <person name="James R."/>
            <person name="Monfort A."/>
            <person name="Pons A."/>
            <person name="Puigdomenech P."/>
            <person name="Douka A."/>
            <person name="Voukelatou E."/>
            <person name="Milioni D."/>
            <person name="Hatzopoulos P."/>
            <person name="Piravandi E."/>
            <person name="Obermaier B."/>
            <person name="Hilbert H."/>
            <person name="Duesterhoeft A."/>
            <person name="Moores T."/>
            <person name="Jones J.D.G."/>
            <person name="Eneva T."/>
            <person name="Palme K."/>
            <person name="Benes V."/>
            <person name="Rechmann S."/>
            <person name="Ansorge W."/>
            <person name="Cooke R."/>
            <person name="Berger C."/>
            <person name="Delseny M."/>
            <person name="Voet M."/>
            <person name="Volckaert G."/>
            <person name="Mewes H.-W."/>
            <person name="Klosterman S."/>
            <person name="Schueller C."/>
            <person name="Chalwatzis N."/>
        </authorList>
    </citation>
    <scope>NUCLEOTIDE SEQUENCE [LARGE SCALE GENOMIC DNA]</scope>
    <source>
        <strain>cv. Columbia</strain>
    </source>
</reference>
<reference key="2">
    <citation type="journal article" date="1999" name="Nature">
        <title>Sequence and analysis of chromosome 4 of the plant Arabidopsis thaliana.</title>
        <authorList>
            <person name="Mayer K.F.X."/>
            <person name="Schueller C."/>
            <person name="Wambutt R."/>
            <person name="Murphy G."/>
            <person name="Volckaert G."/>
            <person name="Pohl T."/>
            <person name="Duesterhoeft A."/>
            <person name="Stiekema W."/>
            <person name="Entian K.-D."/>
            <person name="Terryn N."/>
            <person name="Harris B."/>
            <person name="Ansorge W."/>
            <person name="Brandt P."/>
            <person name="Grivell L.A."/>
            <person name="Rieger M."/>
            <person name="Weichselgartner M."/>
            <person name="de Simone V."/>
            <person name="Obermaier B."/>
            <person name="Mache R."/>
            <person name="Mueller M."/>
            <person name="Kreis M."/>
            <person name="Delseny M."/>
            <person name="Puigdomenech P."/>
            <person name="Watson M."/>
            <person name="Schmidtheini T."/>
            <person name="Reichert B."/>
            <person name="Portetelle D."/>
            <person name="Perez-Alonso M."/>
            <person name="Boutry M."/>
            <person name="Bancroft I."/>
            <person name="Vos P."/>
            <person name="Hoheisel J."/>
            <person name="Zimmermann W."/>
            <person name="Wedler H."/>
            <person name="Ridley P."/>
            <person name="Langham S.-A."/>
            <person name="McCullagh B."/>
            <person name="Bilham L."/>
            <person name="Robben J."/>
            <person name="van der Schueren J."/>
            <person name="Grymonprez B."/>
            <person name="Chuang Y.-J."/>
            <person name="Vandenbussche F."/>
            <person name="Braeken M."/>
            <person name="Weltjens I."/>
            <person name="Voet M."/>
            <person name="Bastiaens I."/>
            <person name="Aert R."/>
            <person name="Defoor E."/>
            <person name="Weitzenegger T."/>
            <person name="Bothe G."/>
            <person name="Ramsperger U."/>
            <person name="Hilbert H."/>
            <person name="Braun M."/>
            <person name="Holzer E."/>
            <person name="Brandt A."/>
            <person name="Peters S."/>
            <person name="van Staveren M."/>
            <person name="Dirkse W."/>
            <person name="Mooijman P."/>
            <person name="Klein Lankhorst R."/>
            <person name="Rose M."/>
            <person name="Hauf J."/>
            <person name="Koetter P."/>
            <person name="Berneiser S."/>
            <person name="Hempel S."/>
            <person name="Feldpausch M."/>
            <person name="Lamberth S."/>
            <person name="Van den Daele H."/>
            <person name="De Keyser A."/>
            <person name="Buysshaert C."/>
            <person name="Gielen J."/>
            <person name="Villarroel R."/>
            <person name="De Clercq R."/>
            <person name="van Montagu M."/>
            <person name="Rogers J."/>
            <person name="Cronin A."/>
            <person name="Quail M.A."/>
            <person name="Bray-Allen S."/>
            <person name="Clark L."/>
            <person name="Doggett J."/>
            <person name="Hall S."/>
            <person name="Kay M."/>
            <person name="Lennard N."/>
            <person name="McLay K."/>
            <person name="Mayes R."/>
            <person name="Pettett A."/>
            <person name="Rajandream M.A."/>
            <person name="Lyne M."/>
            <person name="Benes V."/>
            <person name="Rechmann S."/>
            <person name="Borkova D."/>
            <person name="Bloecker H."/>
            <person name="Scharfe M."/>
            <person name="Grimm M."/>
            <person name="Loehnert T.-H."/>
            <person name="Dose S."/>
            <person name="de Haan M."/>
            <person name="Maarse A.C."/>
            <person name="Schaefer M."/>
            <person name="Mueller-Auer S."/>
            <person name="Gabel C."/>
            <person name="Fuchs M."/>
            <person name="Fartmann B."/>
            <person name="Granderath K."/>
            <person name="Dauner D."/>
            <person name="Herzl A."/>
            <person name="Neumann S."/>
            <person name="Argiriou A."/>
            <person name="Vitale D."/>
            <person name="Liguori R."/>
            <person name="Piravandi E."/>
            <person name="Massenet O."/>
            <person name="Quigley F."/>
            <person name="Clabauld G."/>
            <person name="Muendlein A."/>
            <person name="Felber R."/>
            <person name="Schnabl S."/>
            <person name="Hiller R."/>
            <person name="Schmidt W."/>
            <person name="Lecharny A."/>
            <person name="Aubourg S."/>
            <person name="Chefdor F."/>
            <person name="Cooke R."/>
            <person name="Berger C."/>
            <person name="Monfort A."/>
            <person name="Casacuberta E."/>
            <person name="Gibbons T."/>
            <person name="Weber N."/>
            <person name="Vandenbol M."/>
            <person name="Bargues M."/>
            <person name="Terol J."/>
            <person name="Torres A."/>
            <person name="Perez-Perez A."/>
            <person name="Purnelle B."/>
            <person name="Bent E."/>
            <person name="Johnson S."/>
            <person name="Tacon D."/>
            <person name="Jesse T."/>
            <person name="Heijnen L."/>
            <person name="Schwarz S."/>
            <person name="Scholler P."/>
            <person name="Heber S."/>
            <person name="Francs P."/>
            <person name="Bielke C."/>
            <person name="Frishman D."/>
            <person name="Haase D."/>
            <person name="Lemcke K."/>
            <person name="Mewes H.-W."/>
            <person name="Stocker S."/>
            <person name="Zaccaria P."/>
            <person name="Bevan M."/>
            <person name="Wilson R.K."/>
            <person name="de la Bastide M."/>
            <person name="Habermann K."/>
            <person name="Parnell L."/>
            <person name="Dedhia N."/>
            <person name="Gnoj L."/>
            <person name="Schutz K."/>
            <person name="Huang E."/>
            <person name="Spiegel L."/>
            <person name="Sekhon M."/>
            <person name="Murray J."/>
            <person name="Sheet P."/>
            <person name="Cordes M."/>
            <person name="Abu-Threideh J."/>
            <person name="Stoneking T."/>
            <person name="Kalicki J."/>
            <person name="Graves T."/>
            <person name="Harmon G."/>
            <person name="Edwards J."/>
            <person name="Latreille P."/>
            <person name="Courtney L."/>
            <person name="Cloud J."/>
            <person name="Abbott A."/>
            <person name="Scott K."/>
            <person name="Johnson D."/>
            <person name="Minx P."/>
            <person name="Bentley D."/>
            <person name="Fulton B."/>
            <person name="Miller N."/>
            <person name="Greco T."/>
            <person name="Kemp K."/>
            <person name="Kramer J."/>
            <person name="Fulton L."/>
            <person name="Mardis E."/>
            <person name="Dante M."/>
            <person name="Pepin K."/>
            <person name="Hillier L.W."/>
            <person name="Nelson J."/>
            <person name="Spieth J."/>
            <person name="Ryan E."/>
            <person name="Andrews S."/>
            <person name="Geisel C."/>
            <person name="Layman D."/>
            <person name="Du H."/>
            <person name="Ali J."/>
            <person name="Berghoff A."/>
            <person name="Jones K."/>
            <person name="Drone K."/>
            <person name="Cotton M."/>
            <person name="Joshu C."/>
            <person name="Antonoiu B."/>
            <person name="Zidanic M."/>
            <person name="Strong C."/>
            <person name="Sun H."/>
            <person name="Lamar B."/>
            <person name="Yordan C."/>
            <person name="Ma P."/>
            <person name="Zhong J."/>
            <person name="Preston R."/>
            <person name="Vil D."/>
            <person name="Shekher M."/>
            <person name="Matero A."/>
            <person name="Shah R."/>
            <person name="Swaby I.K."/>
            <person name="O'Shaughnessy A."/>
            <person name="Rodriguez M."/>
            <person name="Hoffman J."/>
            <person name="Till S."/>
            <person name="Granat S."/>
            <person name="Shohdy N."/>
            <person name="Hasegawa A."/>
            <person name="Hameed A."/>
            <person name="Lodhi M."/>
            <person name="Johnson A."/>
            <person name="Chen E."/>
            <person name="Marra M.A."/>
            <person name="Martienssen R."/>
            <person name="McCombie W.R."/>
        </authorList>
    </citation>
    <scope>NUCLEOTIDE SEQUENCE [LARGE SCALE GENOMIC DNA]</scope>
    <source>
        <strain>cv. Columbia</strain>
    </source>
</reference>
<reference key="3">
    <citation type="journal article" date="2017" name="Plant J.">
        <title>Araport11: a complete reannotation of the Arabidopsis thaliana reference genome.</title>
        <authorList>
            <person name="Cheng C.Y."/>
            <person name="Krishnakumar V."/>
            <person name="Chan A.P."/>
            <person name="Thibaud-Nissen F."/>
            <person name="Schobel S."/>
            <person name="Town C.D."/>
        </authorList>
    </citation>
    <scope>GENOME REANNOTATION</scope>
    <source>
        <strain>cv. Columbia</strain>
    </source>
</reference>
<reference key="4">
    <citation type="journal article" date="2003" name="Science">
        <title>Empirical analysis of transcriptional activity in the Arabidopsis genome.</title>
        <authorList>
            <person name="Yamada K."/>
            <person name="Lim J."/>
            <person name="Dale J.M."/>
            <person name="Chen H."/>
            <person name="Shinn P."/>
            <person name="Palm C.J."/>
            <person name="Southwick A.M."/>
            <person name="Wu H.C."/>
            <person name="Kim C.J."/>
            <person name="Nguyen M."/>
            <person name="Pham P.K."/>
            <person name="Cheuk R.F."/>
            <person name="Karlin-Newmann G."/>
            <person name="Liu S.X."/>
            <person name="Lam B."/>
            <person name="Sakano H."/>
            <person name="Wu T."/>
            <person name="Yu G."/>
            <person name="Miranda M."/>
            <person name="Quach H.L."/>
            <person name="Tripp M."/>
            <person name="Chang C.H."/>
            <person name="Lee J.M."/>
            <person name="Toriumi M.J."/>
            <person name="Chan M.M."/>
            <person name="Tang C.C."/>
            <person name="Onodera C.S."/>
            <person name="Deng J.M."/>
            <person name="Akiyama K."/>
            <person name="Ansari Y."/>
            <person name="Arakawa T."/>
            <person name="Banh J."/>
            <person name="Banno F."/>
            <person name="Bowser L."/>
            <person name="Brooks S.Y."/>
            <person name="Carninci P."/>
            <person name="Chao Q."/>
            <person name="Choy N."/>
            <person name="Enju A."/>
            <person name="Goldsmith A.D."/>
            <person name="Gurjal M."/>
            <person name="Hansen N.F."/>
            <person name="Hayashizaki Y."/>
            <person name="Johnson-Hopson C."/>
            <person name="Hsuan V.W."/>
            <person name="Iida K."/>
            <person name="Karnes M."/>
            <person name="Khan S."/>
            <person name="Koesema E."/>
            <person name="Ishida J."/>
            <person name="Jiang P.X."/>
            <person name="Jones T."/>
            <person name="Kawai J."/>
            <person name="Kamiya A."/>
            <person name="Meyers C."/>
            <person name="Nakajima M."/>
            <person name="Narusaka M."/>
            <person name="Seki M."/>
            <person name="Sakurai T."/>
            <person name="Satou M."/>
            <person name="Tamse R."/>
            <person name="Vaysberg M."/>
            <person name="Wallender E.K."/>
            <person name="Wong C."/>
            <person name="Yamamura Y."/>
            <person name="Yuan S."/>
            <person name="Shinozaki K."/>
            <person name="Davis R.W."/>
            <person name="Theologis A."/>
            <person name="Ecker J.R."/>
        </authorList>
    </citation>
    <scope>NUCLEOTIDE SEQUENCE [LARGE SCALE MRNA]</scope>
    <source>
        <strain>cv. Columbia</strain>
    </source>
</reference>
<reference key="5">
    <citation type="journal article" date="2008" name="Plant Cell">
        <title>The Arabidopsis onset of leaf death5 mutation of quinolinate synthase affects nicotinamide adenine dinucleotide biosynthesis and causes early ageing.</title>
        <authorList>
            <person name="Schippers J.H."/>
            <person name="Nunes-Nesi A."/>
            <person name="Apetrei R."/>
            <person name="Hille J."/>
            <person name="Fernie A.R."/>
            <person name="Dijkwel P.P."/>
        </authorList>
    </citation>
    <scope>IDENTIFICATION</scope>
    <scope>INDUCTION</scope>
</reference>
<protein>
    <recommendedName>
        <fullName evidence="5">Nicotinate phosphoribosyltransferase 1</fullName>
        <shortName>NAPRTase</shortName>
        <ecNumber evidence="6">6.3.4.21</ecNumber>
    </recommendedName>
</protein>
<evidence type="ECO:0000250" key="1">
    <source>
        <dbReference type="UniProtKB" id="P22253"/>
    </source>
</evidence>
<evidence type="ECO:0000250" key="2">
    <source>
        <dbReference type="UniProtKB" id="Q6XQN6"/>
    </source>
</evidence>
<evidence type="ECO:0000250" key="3">
    <source>
        <dbReference type="UniProtKB" id="Q9HJ28"/>
    </source>
</evidence>
<evidence type="ECO:0000269" key="4">
    <source>
    </source>
</evidence>
<evidence type="ECO:0000303" key="5">
    <source>
    </source>
</evidence>
<evidence type="ECO:0000305" key="6"/>
<evidence type="ECO:0000312" key="7">
    <source>
        <dbReference type="Araport" id="AT4G36940"/>
    </source>
</evidence>
<evidence type="ECO:0000312" key="8">
    <source>
        <dbReference type="EMBL" id="AAM13003.1"/>
    </source>
</evidence>
<evidence type="ECO:0000312" key="9">
    <source>
        <dbReference type="EMBL" id="CAB16797.1"/>
    </source>
</evidence>
<comment type="function">
    <text evidence="2">Catalyzes the first step in the biosynthesis of NAD from nicotinic acid, the ATP-dependent synthesis of beta-nicotinate D-ribonucleotide from nicotinate and 5-phospho-D-ribose 1-phosphate. Helps prevent cellular oxidative stress via its role in NAD biosynthesis.</text>
</comment>
<comment type="catalytic activity">
    <reaction evidence="2">
        <text>nicotinate + 5-phospho-alpha-D-ribose 1-diphosphate + ATP + H2O = nicotinate beta-D-ribonucleotide + ADP + phosphate + diphosphate</text>
        <dbReference type="Rhea" id="RHEA:36163"/>
        <dbReference type="ChEBI" id="CHEBI:15377"/>
        <dbReference type="ChEBI" id="CHEBI:30616"/>
        <dbReference type="ChEBI" id="CHEBI:32544"/>
        <dbReference type="ChEBI" id="CHEBI:33019"/>
        <dbReference type="ChEBI" id="CHEBI:43474"/>
        <dbReference type="ChEBI" id="CHEBI:57502"/>
        <dbReference type="ChEBI" id="CHEBI:58017"/>
        <dbReference type="ChEBI" id="CHEBI:456216"/>
        <dbReference type="EC" id="6.3.4.21"/>
    </reaction>
</comment>
<comment type="cofactor">
    <cofactor evidence="2">
        <name>Mg(2+)</name>
        <dbReference type="ChEBI" id="CHEBI:18420"/>
    </cofactor>
    <cofactor evidence="2">
        <name>Mn(2+)</name>
        <dbReference type="ChEBI" id="CHEBI:29035"/>
    </cofactor>
    <text evidence="2">Activity is highest with Mn(2+).</text>
</comment>
<comment type="pathway">
    <text evidence="2">Cofactor biosynthesis; NAD(+) biosynthesis; nicotinate D-ribonucleotide from nicotinate: step 1/1.</text>
</comment>
<comment type="induction">
    <text evidence="4">Not regulated in the quinolinate synthase mutant old5 causing increased NAD steady state levels.</text>
</comment>
<comment type="PTM">
    <text evidence="1">Transiently phosphorylated on a His residue during the reaction cycle. Phosphorylation strongly increases the affinity for substrates and increases the rate of nicotinate D-ribonucleotide production. Dephosphorylation regenerates the low-affinity form of the enzyme, leading to product release.</text>
</comment>
<comment type="similarity">
    <text evidence="6">Belongs to the NAPRTase family.</text>
</comment>
<comment type="sequence caution" evidence="6">
    <conflict type="erroneous gene model prediction">
        <sequence resource="EMBL-CDS" id="CAB16797"/>
    </conflict>
</comment>
<comment type="sequence caution" evidence="6">
    <conflict type="erroneous gene model prediction">
        <sequence resource="EMBL-CDS" id="CAB80360"/>
    </conflict>
</comment>
<keyword id="KW-0328">Glycosyltransferase</keyword>
<keyword id="KW-0436">Ligase</keyword>
<keyword id="KW-0460">Magnesium</keyword>
<keyword id="KW-0464">Manganese</keyword>
<keyword id="KW-0479">Metal-binding</keyword>
<keyword id="KW-0597">Phosphoprotein</keyword>
<keyword id="KW-0662">Pyridine nucleotide biosynthesis</keyword>
<keyword id="KW-1185">Reference proteome</keyword>
<keyword id="KW-0808">Transferase</keyword>
<organism evidence="8">
    <name type="scientific">Arabidopsis thaliana</name>
    <name type="common">Mouse-ear cress</name>
    <dbReference type="NCBI Taxonomy" id="3702"/>
    <lineage>
        <taxon>Eukaryota</taxon>
        <taxon>Viridiplantae</taxon>
        <taxon>Streptophyta</taxon>
        <taxon>Embryophyta</taxon>
        <taxon>Tracheophyta</taxon>
        <taxon>Spermatophyta</taxon>
        <taxon>Magnoliopsida</taxon>
        <taxon>eudicotyledons</taxon>
        <taxon>Gunneridae</taxon>
        <taxon>Pentapetalae</taxon>
        <taxon>rosids</taxon>
        <taxon>malvids</taxon>
        <taxon>Brassicales</taxon>
        <taxon>Brassicaceae</taxon>
        <taxon>Camelineae</taxon>
        <taxon>Arabidopsis</taxon>
    </lineage>
</organism>